<reference key="1">
    <citation type="submission" date="2009-06" db="EMBL/GenBank/DDBJ databases">
        <title>Complete sequence of chromosome of Geopacillus sp. WCH70.</title>
        <authorList>
            <consortium name="US DOE Joint Genome Institute"/>
            <person name="Lucas S."/>
            <person name="Copeland A."/>
            <person name="Lapidus A."/>
            <person name="Glavina del Rio T."/>
            <person name="Dalin E."/>
            <person name="Tice H."/>
            <person name="Bruce D."/>
            <person name="Goodwin L."/>
            <person name="Pitluck S."/>
            <person name="Chertkov O."/>
            <person name="Brettin T."/>
            <person name="Detter J.C."/>
            <person name="Han C."/>
            <person name="Larimer F."/>
            <person name="Land M."/>
            <person name="Hauser L."/>
            <person name="Kyrpides N."/>
            <person name="Mikhailova N."/>
            <person name="Brumm P."/>
            <person name="Mead D.A."/>
            <person name="Richardson P."/>
        </authorList>
    </citation>
    <scope>NUCLEOTIDE SEQUENCE [LARGE SCALE GENOMIC DNA]</scope>
    <source>
        <strain>WCH70</strain>
    </source>
</reference>
<dbReference type="EMBL" id="CP001638">
    <property type="protein sequence ID" value="ACS22946.1"/>
    <property type="molecule type" value="Genomic_DNA"/>
</dbReference>
<dbReference type="SMR" id="C5D330"/>
<dbReference type="STRING" id="471223.GWCH70_0004"/>
<dbReference type="KEGG" id="gwc:GWCH70_0004"/>
<dbReference type="eggNOG" id="COG1195">
    <property type="taxonomic scope" value="Bacteria"/>
</dbReference>
<dbReference type="HOGENOM" id="CLU_040267_0_1_9"/>
<dbReference type="OrthoDB" id="9803889at2"/>
<dbReference type="GO" id="GO:0005737">
    <property type="term" value="C:cytoplasm"/>
    <property type="evidence" value="ECO:0007669"/>
    <property type="project" value="UniProtKB-SubCell"/>
</dbReference>
<dbReference type="GO" id="GO:0005524">
    <property type="term" value="F:ATP binding"/>
    <property type="evidence" value="ECO:0007669"/>
    <property type="project" value="UniProtKB-UniRule"/>
</dbReference>
<dbReference type="GO" id="GO:0003697">
    <property type="term" value="F:single-stranded DNA binding"/>
    <property type="evidence" value="ECO:0007669"/>
    <property type="project" value="UniProtKB-UniRule"/>
</dbReference>
<dbReference type="GO" id="GO:0006260">
    <property type="term" value="P:DNA replication"/>
    <property type="evidence" value="ECO:0007669"/>
    <property type="project" value="UniProtKB-UniRule"/>
</dbReference>
<dbReference type="GO" id="GO:0000731">
    <property type="term" value="P:DNA synthesis involved in DNA repair"/>
    <property type="evidence" value="ECO:0007669"/>
    <property type="project" value="TreeGrafter"/>
</dbReference>
<dbReference type="GO" id="GO:0006302">
    <property type="term" value="P:double-strand break repair"/>
    <property type="evidence" value="ECO:0007669"/>
    <property type="project" value="TreeGrafter"/>
</dbReference>
<dbReference type="GO" id="GO:0009432">
    <property type="term" value="P:SOS response"/>
    <property type="evidence" value="ECO:0007669"/>
    <property type="project" value="UniProtKB-UniRule"/>
</dbReference>
<dbReference type="CDD" id="cd03242">
    <property type="entry name" value="ABC_RecF"/>
    <property type="match status" value="1"/>
</dbReference>
<dbReference type="FunFam" id="1.20.1050.90:FF:000002">
    <property type="entry name" value="DNA replication and repair protein RecF"/>
    <property type="match status" value="1"/>
</dbReference>
<dbReference type="Gene3D" id="3.40.50.300">
    <property type="entry name" value="P-loop containing nucleotide triphosphate hydrolases"/>
    <property type="match status" value="1"/>
</dbReference>
<dbReference type="Gene3D" id="1.20.1050.90">
    <property type="entry name" value="RecF/RecN/SMC, N-terminal domain"/>
    <property type="match status" value="1"/>
</dbReference>
<dbReference type="HAMAP" id="MF_00365">
    <property type="entry name" value="RecF"/>
    <property type="match status" value="1"/>
</dbReference>
<dbReference type="InterPro" id="IPR001238">
    <property type="entry name" value="DNA-binding_RecF"/>
</dbReference>
<dbReference type="InterPro" id="IPR018078">
    <property type="entry name" value="DNA-binding_RecF_CS"/>
</dbReference>
<dbReference type="InterPro" id="IPR027417">
    <property type="entry name" value="P-loop_NTPase"/>
</dbReference>
<dbReference type="InterPro" id="IPR003395">
    <property type="entry name" value="RecF/RecN/SMC_N"/>
</dbReference>
<dbReference type="InterPro" id="IPR042174">
    <property type="entry name" value="RecF_2"/>
</dbReference>
<dbReference type="NCBIfam" id="TIGR00611">
    <property type="entry name" value="recf"/>
    <property type="match status" value="1"/>
</dbReference>
<dbReference type="PANTHER" id="PTHR32182">
    <property type="entry name" value="DNA REPLICATION AND REPAIR PROTEIN RECF"/>
    <property type="match status" value="1"/>
</dbReference>
<dbReference type="PANTHER" id="PTHR32182:SF0">
    <property type="entry name" value="DNA REPLICATION AND REPAIR PROTEIN RECF"/>
    <property type="match status" value="1"/>
</dbReference>
<dbReference type="Pfam" id="PF02463">
    <property type="entry name" value="SMC_N"/>
    <property type="match status" value="1"/>
</dbReference>
<dbReference type="SUPFAM" id="SSF52540">
    <property type="entry name" value="P-loop containing nucleoside triphosphate hydrolases"/>
    <property type="match status" value="1"/>
</dbReference>
<dbReference type="PROSITE" id="PS00617">
    <property type="entry name" value="RECF_1"/>
    <property type="match status" value="1"/>
</dbReference>
<dbReference type="PROSITE" id="PS00618">
    <property type="entry name" value="RECF_2"/>
    <property type="match status" value="1"/>
</dbReference>
<accession>C5D330</accession>
<keyword id="KW-0067">ATP-binding</keyword>
<keyword id="KW-0963">Cytoplasm</keyword>
<keyword id="KW-0227">DNA damage</keyword>
<keyword id="KW-0234">DNA repair</keyword>
<keyword id="KW-0235">DNA replication</keyword>
<keyword id="KW-0238">DNA-binding</keyword>
<keyword id="KW-0547">Nucleotide-binding</keyword>
<keyword id="KW-0742">SOS response</keyword>
<sequence>MFLTHLSLKNYRNYESETIEFANNVNIILGENAQGKTNMMEAIYVLAMAKSHRTTNDKDLIRWDEDYAKIEGKAMKKNGALSLELIISKKGKKAKCNHIEQQRLSQYVGHLNIVMFAPEDLNLVKGSPQVRRRFVDMEIGQVSPVYIHDLSQYQKLLQQRNHYLKMLQTREQQDETVLDILTEQLIPLAAKITLKRYEFLLLLQKWAAPIHHEISRGLETLQIQYRPSVDVSEKIELSRIIEAYSEKFATIKEREIQRGMTLAGPHRDDIAFSVNGKDVQIFGSQGQQRTTALSIKLAEIELIFSEIGDYPILLLDDVLSELDDFRQTHLLDTIRKKVQTFVTTTSIEGIEHDIIKEAAIYKVHSGHITAPLCD</sequence>
<organism>
    <name type="scientific">Geobacillus sp. (strain WCH70)</name>
    <dbReference type="NCBI Taxonomy" id="471223"/>
    <lineage>
        <taxon>Bacteria</taxon>
        <taxon>Bacillati</taxon>
        <taxon>Bacillota</taxon>
        <taxon>Bacilli</taxon>
        <taxon>Bacillales</taxon>
        <taxon>Anoxybacillaceae</taxon>
        <taxon>Geobacillus</taxon>
    </lineage>
</organism>
<name>RECF_GEOSW</name>
<feature type="chain" id="PRO_1000205495" description="DNA replication and repair protein RecF">
    <location>
        <begin position="1"/>
        <end position="374"/>
    </location>
</feature>
<feature type="binding site" evidence="1">
    <location>
        <begin position="30"/>
        <end position="37"/>
    </location>
    <ligand>
        <name>ATP</name>
        <dbReference type="ChEBI" id="CHEBI:30616"/>
    </ligand>
</feature>
<evidence type="ECO:0000255" key="1">
    <source>
        <dbReference type="HAMAP-Rule" id="MF_00365"/>
    </source>
</evidence>
<protein>
    <recommendedName>
        <fullName evidence="1">DNA replication and repair protein RecF</fullName>
    </recommendedName>
</protein>
<comment type="function">
    <text evidence="1">The RecF protein is involved in DNA metabolism; it is required for DNA replication and normal SOS inducibility. RecF binds preferentially to single-stranded, linear DNA. It also seems to bind ATP.</text>
</comment>
<comment type="subcellular location">
    <subcellularLocation>
        <location evidence="1">Cytoplasm</location>
    </subcellularLocation>
</comment>
<comment type="similarity">
    <text evidence="1">Belongs to the RecF family.</text>
</comment>
<proteinExistence type="inferred from homology"/>
<gene>
    <name evidence="1" type="primary">recF</name>
    <name type="ordered locus">GWCH70_0004</name>
</gene>